<name>Y2646_ECTM1</name>
<accession>A4XVN5</accession>
<organism>
    <name type="scientific">Ectopseudomonas mendocina (strain ymp)</name>
    <name type="common">Pseudomonas mendocina</name>
    <dbReference type="NCBI Taxonomy" id="399739"/>
    <lineage>
        <taxon>Bacteria</taxon>
        <taxon>Pseudomonadati</taxon>
        <taxon>Pseudomonadota</taxon>
        <taxon>Gammaproteobacteria</taxon>
        <taxon>Pseudomonadales</taxon>
        <taxon>Pseudomonadaceae</taxon>
        <taxon>Ectopseudomonas</taxon>
    </lineage>
</organism>
<feature type="chain" id="PRO_1000059203" description="Nucleoid-associated protein Pmen_2646">
    <location>
        <begin position="1"/>
        <end position="108"/>
    </location>
</feature>
<feature type="region of interest" description="Disordered" evidence="2">
    <location>
        <begin position="1"/>
        <end position="25"/>
    </location>
</feature>
<comment type="function">
    <text evidence="1">Binds to DNA and alters its conformation. May be involved in regulation of gene expression, nucleoid organization and DNA protection.</text>
</comment>
<comment type="subunit">
    <text evidence="1">Homodimer.</text>
</comment>
<comment type="subcellular location">
    <subcellularLocation>
        <location evidence="1">Cytoplasm</location>
        <location evidence="1">Nucleoid</location>
    </subcellularLocation>
</comment>
<comment type="similarity">
    <text evidence="1">Belongs to the YbaB/EbfC family.</text>
</comment>
<gene>
    <name type="ordered locus">Pmen_2646</name>
</gene>
<sequence>MMKGGMAGLMKQAQQMQEKMQKMQEELANAEVTGQSGAGLVSVVMTGRHDVKRITLDDSLMQEDKEVLEDLIAAAVNDAVRKVEQNSQEKMAGMTAGMQLPPGFKMPF</sequence>
<reference key="1">
    <citation type="submission" date="2007-04" db="EMBL/GenBank/DDBJ databases">
        <title>Complete sequence of Pseudomonas mendocina ymp.</title>
        <authorList>
            <consortium name="US DOE Joint Genome Institute"/>
            <person name="Copeland A."/>
            <person name="Lucas S."/>
            <person name="Lapidus A."/>
            <person name="Barry K."/>
            <person name="Glavina del Rio T."/>
            <person name="Dalin E."/>
            <person name="Tice H."/>
            <person name="Pitluck S."/>
            <person name="Kiss H."/>
            <person name="Brettin T."/>
            <person name="Detter J.C."/>
            <person name="Bruce D."/>
            <person name="Han C."/>
            <person name="Schmutz J."/>
            <person name="Larimer F."/>
            <person name="Land M."/>
            <person name="Hauser L."/>
            <person name="Kyrpides N."/>
            <person name="Mikhailova N."/>
            <person name="Hersman L."/>
            <person name="Dubois J."/>
            <person name="Maurice P."/>
            <person name="Richardson P."/>
        </authorList>
    </citation>
    <scope>NUCLEOTIDE SEQUENCE [LARGE SCALE GENOMIC DNA]</scope>
    <source>
        <strain>ymp</strain>
    </source>
</reference>
<evidence type="ECO:0000255" key="1">
    <source>
        <dbReference type="HAMAP-Rule" id="MF_00274"/>
    </source>
</evidence>
<evidence type="ECO:0000256" key="2">
    <source>
        <dbReference type="SAM" id="MobiDB-lite"/>
    </source>
</evidence>
<protein>
    <recommendedName>
        <fullName evidence="1">Nucleoid-associated protein Pmen_2646</fullName>
    </recommendedName>
</protein>
<keyword id="KW-0963">Cytoplasm</keyword>
<keyword id="KW-0238">DNA-binding</keyword>
<proteinExistence type="inferred from homology"/>
<dbReference type="EMBL" id="CP000680">
    <property type="protein sequence ID" value="ABP85401.1"/>
    <property type="molecule type" value="Genomic_DNA"/>
</dbReference>
<dbReference type="SMR" id="A4XVN5"/>
<dbReference type="STRING" id="399739.Pmen_2646"/>
<dbReference type="KEGG" id="pmy:Pmen_2646"/>
<dbReference type="eggNOG" id="COG0718">
    <property type="taxonomic scope" value="Bacteria"/>
</dbReference>
<dbReference type="HOGENOM" id="CLU_140930_0_0_6"/>
<dbReference type="OrthoDB" id="9808738at2"/>
<dbReference type="GO" id="GO:0043590">
    <property type="term" value="C:bacterial nucleoid"/>
    <property type="evidence" value="ECO:0007669"/>
    <property type="project" value="UniProtKB-UniRule"/>
</dbReference>
<dbReference type="GO" id="GO:0005829">
    <property type="term" value="C:cytosol"/>
    <property type="evidence" value="ECO:0007669"/>
    <property type="project" value="TreeGrafter"/>
</dbReference>
<dbReference type="GO" id="GO:0003677">
    <property type="term" value="F:DNA binding"/>
    <property type="evidence" value="ECO:0007669"/>
    <property type="project" value="UniProtKB-UniRule"/>
</dbReference>
<dbReference type="FunFam" id="3.30.1310.10:FF:000001">
    <property type="entry name" value="Nucleoid-associated protein YbaB"/>
    <property type="match status" value="1"/>
</dbReference>
<dbReference type="Gene3D" id="3.30.1310.10">
    <property type="entry name" value="Nucleoid-associated protein YbaB-like domain"/>
    <property type="match status" value="1"/>
</dbReference>
<dbReference type="HAMAP" id="MF_00274">
    <property type="entry name" value="DNA_YbaB_EbfC"/>
    <property type="match status" value="1"/>
</dbReference>
<dbReference type="InterPro" id="IPR036894">
    <property type="entry name" value="YbaB-like_sf"/>
</dbReference>
<dbReference type="InterPro" id="IPR004401">
    <property type="entry name" value="YbaB/EbfC"/>
</dbReference>
<dbReference type="NCBIfam" id="TIGR00103">
    <property type="entry name" value="DNA_YbaB_EbfC"/>
    <property type="match status" value="1"/>
</dbReference>
<dbReference type="PANTHER" id="PTHR33449">
    <property type="entry name" value="NUCLEOID-ASSOCIATED PROTEIN YBAB"/>
    <property type="match status" value="1"/>
</dbReference>
<dbReference type="PANTHER" id="PTHR33449:SF1">
    <property type="entry name" value="NUCLEOID-ASSOCIATED PROTEIN YBAB"/>
    <property type="match status" value="1"/>
</dbReference>
<dbReference type="Pfam" id="PF02575">
    <property type="entry name" value="YbaB_DNA_bd"/>
    <property type="match status" value="1"/>
</dbReference>
<dbReference type="PIRSF" id="PIRSF004555">
    <property type="entry name" value="UCP004555"/>
    <property type="match status" value="1"/>
</dbReference>
<dbReference type="SUPFAM" id="SSF82607">
    <property type="entry name" value="YbaB-like"/>
    <property type="match status" value="1"/>
</dbReference>